<accession>Q7SG06</accession>
<protein>
    <recommendedName>
        <fullName>Peptidyl-prolyl cis-trans isomerase H</fullName>
        <shortName>PPIase H</shortName>
        <ecNumber>5.2.1.8</ecNumber>
    </recommendedName>
    <alternativeName>
        <fullName>Rotamase H</fullName>
    </alternativeName>
</protein>
<keyword id="KW-0413">Isomerase</keyword>
<keyword id="KW-0539">Nucleus</keyword>
<keyword id="KW-1185">Reference proteome</keyword>
<keyword id="KW-0697">Rotamase</keyword>
<feature type="chain" id="PRO_0000232958" description="Peptidyl-prolyl cis-trans isomerase H">
    <location>
        <begin position="1"/>
        <end position="182"/>
    </location>
</feature>
<feature type="domain" description="PPIase cyclophilin-type" evidence="2">
    <location>
        <begin position="15"/>
        <end position="181"/>
    </location>
</feature>
<sequence length="182" mass="19734">MAPTVLPASGNPLVFFDITLGGEPLGRITFELFKDVVPRTAENFRQFCTGESKNNLGRPQGYKGSKFHRIIPNFMCQGGDFLNGDGTGSTCIYGTKSFADENFLLKHDTPGLLSMANAGPNTNGSQFFITTVPTPFLDGKHVVFGKVVDGMDVVKKMENTKTGYRGKDVPNLDVVIAQCGEM</sequence>
<proteinExistence type="inferred from homology"/>
<name>PPIH_NEUCR</name>
<evidence type="ECO:0000250" key="1"/>
<evidence type="ECO:0000255" key="2">
    <source>
        <dbReference type="PROSITE-ProRule" id="PRU00156"/>
    </source>
</evidence>
<evidence type="ECO:0000305" key="3"/>
<organism>
    <name type="scientific">Neurospora crassa (strain ATCC 24698 / 74-OR23-1A / CBS 708.71 / DSM 1257 / FGSC 987)</name>
    <dbReference type="NCBI Taxonomy" id="367110"/>
    <lineage>
        <taxon>Eukaryota</taxon>
        <taxon>Fungi</taxon>
        <taxon>Dikarya</taxon>
        <taxon>Ascomycota</taxon>
        <taxon>Pezizomycotina</taxon>
        <taxon>Sordariomycetes</taxon>
        <taxon>Sordariomycetidae</taxon>
        <taxon>Sordariales</taxon>
        <taxon>Sordariaceae</taxon>
        <taxon>Neurospora</taxon>
    </lineage>
</organism>
<dbReference type="EC" id="5.2.1.8"/>
<dbReference type="EMBL" id="CM002236">
    <property type="protein sequence ID" value="EAA35781.1"/>
    <property type="molecule type" value="Genomic_DNA"/>
</dbReference>
<dbReference type="EMBL" id="BX842633">
    <property type="protein sequence ID" value="CAE76450.1"/>
    <property type="molecule type" value="Genomic_DNA"/>
</dbReference>
<dbReference type="RefSeq" id="XP_965017.1">
    <property type="nucleotide sequence ID" value="XM_959924.2"/>
</dbReference>
<dbReference type="SMR" id="Q7SG06"/>
<dbReference type="STRING" id="367110.Q7SG06"/>
<dbReference type="PaxDb" id="5141-EFNCRP00000002116"/>
<dbReference type="EnsemblFungi" id="EAA35781">
    <property type="protein sequence ID" value="EAA35781"/>
    <property type="gene ID" value="NCU02614"/>
</dbReference>
<dbReference type="GeneID" id="3881157"/>
<dbReference type="KEGG" id="ncr:NCU02614"/>
<dbReference type="VEuPathDB" id="FungiDB:NCU02614"/>
<dbReference type="HOGENOM" id="CLU_012062_4_3_1"/>
<dbReference type="InParanoid" id="Q7SG06"/>
<dbReference type="OrthoDB" id="193499at2759"/>
<dbReference type="Proteomes" id="UP000001805">
    <property type="component" value="Chromosome 1, Linkage Group I"/>
</dbReference>
<dbReference type="GO" id="GO:0005737">
    <property type="term" value="C:cytoplasm"/>
    <property type="evidence" value="ECO:0000318"/>
    <property type="project" value="GO_Central"/>
</dbReference>
<dbReference type="GO" id="GO:0043231">
    <property type="term" value="C:intracellular membrane-bounded organelle"/>
    <property type="evidence" value="ECO:0000318"/>
    <property type="project" value="GO_Central"/>
</dbReference>
<dbReference type="GO" id="GO:0005634">
    <property type="term" value="C:nucleus"/>
    <property type="evidence" value="ECO:0007669"/>
    <property type="project" value="UniProtKB-SubCell"/>
</dbReference>
<dbReference type="GO" id="GO:0016018">
    <property type="term" value="F:cyclosporin A binding"/>
    <property type="evidence" value="ECO:0000318"/>
    <property type="project" value="GO_Central"/>
</dbReference>
<dbReference type="GO" id="GO:0003755">
    <property type="term" value="F:peptidyl-prolyl cis-trans isomerase activity"/>
    <property type="evidence" value="ECO:0000318"/>
    <property type="project" value="GO_Central"/>
</dbReference>
<dbReference type="GO" id="GO:0006457">
    <property type="term" value="P:protein folding"/>
    <property type="evidence" value="ECO:0000318"/>
    <property type="project" value="GO_Central"/>
</dbReference>
<dbReference type="CDD" id="cd01926">
    <property type="entry name" value="cyclophilin_ABH_like"/>
    <property type="match status" value="1"/>
</dbReference>
<dbReference type="FunFam" id="2.40.100.10:FF:000035">
    <property type="entry name" value="Peptidyl-prolyl cis-trans isomerase"/>
    <property type="match status" value="1"/>
</dbReference>
<dbReference type="Gene3D" id="2.40.100.10">
    <property type="entry name" value="Cyclophilin-like"/>
    <property type="match status" value="1"/>
</dbReference>
<dbReference type="InterPro" id="IPR029000">
    <property type="entry name" value="Cyclophilin-like_dom_sf"/>
</dbReference>
<dbReference type="InterPro" id="IPR024936">
    <property type="entry name" value="Cyclophilin-type_PPIase"/>
</dbReference>
<dbReference type="InterPro" id="IPR020892">
    <property type="entry name" value="Cyclophilin-type_PPIase_CS"/>
</dbReference>
<dbReference type="InterPro" id="IPR002130">
    <property type="entry name" value="Cyclophilin-type_PPIase_dom"/>
</dbReference>
<dbReference type="PANTHER" id="PTHR11071">
    <property type="entry name" value="PEPTIDYL-PROLYL CIS-TRANS ISOMERASE"/>
    <property type="match status" value="1"/>
</dbReference>
<dbReference type="PANTHER" id="PTHR11071:SF561">
    <property type="entry name" value="PEPTIDYL-PROLYL CIS-TRANS ISOMERASE D-RELATED"/>
    <property type="match status" value="1"/>
</dbReference>
<dbReference type="Pfam" id="PF00160">
    <property type="entry name" value="Pro_isomerase"/>
    <property type="match status" value="1"/>
</dbReference>
<dbReference type="PIRSF" id="PIRSF001467">
    <property type="entry name" value="Peptidylpro_ismrse"/>
    <property type="match status" value="1"/>
</dbReference>
<dbReference type="PRINTS" id="PR00153">
    <property type="entry name" value="CSAPPISMRASE"/>
</dbReference>
<dbReference type="SUPFAM" id="SSF50891">
    <property type="entry name" value="Cyclophilin-like"/>
    <property type="match status" value="1"/>
</dbReference>
<dbReference type="PROSITE" id="PS00170">
    <property type="entry name" value="CSA_PPIASE_1"/>
    <property type="match status" value="1"/>
</dbReference>
<dbReference type="PROSITE" id="PS50072">
    <property type="entry name" value="CSA_PPIASE_2"/>
    <property type="match status" value="1"/>
</dbReference>
<reference key="1">
    <citation type="journal article" date="2003" name="Nucleic Acids Res.">
        <title>What's in the genome of a filamentous fungus? Analysis of the Neurospora genome sequence.</title>
        <authorList>
            <person name="Mannhaupt G."/>
            <person name="Montrone C."/>
            <person name="Haase D."/>
            <person name="Mewes H.-W."/>
            <person name="Aign V."/>
            <person name="Hoheisel J.D."/>
            <person name="Fartmann B."/>
            <person name="Nyakatura G."/>
            <person name="Kempken F."/>
            <person name="Maier J."/>
            <person name="Schulte U."/>
        </authorList>
    </citation>
    <scope>NUCLEOTIDE SEQUENCE [LARGE SCALE GENOMIC DNA]</scope>
    <source>
        <strain>ATCC 24698 / 74-OR23-1A / CBS 708.71 / DSM 1257 / FGSC 987</strain>
    </source>
</reference>
<reference key="2">
    <citation type="journal article" date="2003" name="Nature">
        <title>The genome sequence of the filamentous fungus Neurospora crassa.</title>
        <authorList>
            <person name="Galagan J.E."/>
            <person name="Calvo S.E."/>
            <person name="Borkovich K.A."/>
            <person name="Selker E.U."/>
            <person name="Read N.D."/>
            <person name="Jaffe D.B."/>
            <person name="FitzHugh W."/>
            <person name="Ma L.-J."/>
            <person name="Smirnov S."/>
            <person name="Purcell S."/>
            <person name="Rehman B."/>
            <person name="Elkins T."/>
            <person name="Engels R."/>
            <person name="Wang S."/>
            <person name="Nielsen C.B."/>
            <person name="Butler J."/>
            <person name="Endrizzi M."/>
            <person name="Qui D."/>
            <person name="Ianakiev P."/>
            <person name="Bell-Pedersen D."/>
            <person name="Nelson M.A."/>
            <person name="Werner-Washburne M."/>
            <person name="Selitrennikoff C.P."/>
            <person name="Kinsey J.A."/>
            <person name="Braun E.L."/>
            <person name="Zelter A."/>
            <person name="Schulte U."/>
            <person name="Kothe G.O."/>
            <person name="Jedd G."/>
            <person name="Mewes H.-W."/>
            <person name="Staben C."/>
            <person name="Marcotte E."/>
            <person name="Greenberg D."/>
            <person name="Roy A."/>
            <person name="Foley K."/>
            <person name="Naylor J."/>
            <person name="Stange-Thomann N."/>
            <person name="Barrett R."/>
            <person name="Gnerre S."/>
            <person name="Kamal M."/>
            <person name="Kamvysselis M."/>
            <person name="Mauceli E.W."/>
            <person name="Bielke C."/>
            <person name="Rudd S."/>
            <person name="Frishman D."/>
            <person name="Krystofova S."/>
            <person name="Rasmussen C."/>
            <person name="Metzenberg R.L."/>
            <person name="Perkins D.D."/>
            <person name="Kroken S."/>
            <person name="Cogoni C."/>
            <person name="Macino G."/>
            <person name="Catcheside D.E.A."/>
            <person name="Li W."/>
            <person name="Pratt R.J."/>
            <person name="Osmani S.A."/>
            <person name="DeSouza C.P.C."/>
            <person name="Glass N.L."/>
            <person name="Orbach M.J."/>
            <person name="Berglund J.A."/>
            <person name="Voelker R."/>
            <person name="Yarden O."/>
            <person name="Plamann M."/>
            <person name="Seiler S."/>
            <person name="Dunlap J.C."/>
            <person name="Radford A."/>
            <person name="Aramayo R."/>
            <person name="Natvig D.O."/>
            <person name="Alex L.A."/>
            <person name="Mannhaupt G."/>
            <person name="Ebbole D.J."/>
            <person name="Freitag M."/>
            <person name="Paulsen I."/>
            <person name="Sachs M.S."/>
            <person name="Lander E.S."/>
            <person name="Nusbaum C."/>
            <person name="Birren B.W."/>
        </authorList>
    </citation>
    <scope>NUCLEOTIDE SEQUENCE [LARGE SCALE GENOMIC DNA]</scope>
    <source>
        <strain>ATCC 24698 / 74-OR23-1A / CBS 708.71 / DSM 1257 / FGSC 987</strain>
    </source>
</reference>
<gene>
    <name type="primary">cyp-3</name>
    <name type="ORF">53H1.080</name>
    <name type="ORF">NCU02614</name>
</gene>
<comment type="function">
    <text evidence="1">PPIases accelerate the folding of proteins. It catalyzes the cis-trans isomerization of proline imidic peptide bonds in oligopeptides (By similarity).</text>
</comment>
<comment type="catalytic activity">
    <reaction>
        <text>[protein]-peptidylproline (omega=180) = [protein]-peptidylproline (omega=0)</text>
        <dbReference type="Rhea" id="RHEA:16237"/>
        <dbReference type="Rhea" id="RHEA-COMP:10747"/>
        <dbReference type="Rhea" id="RHEA-COMP:10748"/>
        <dbReference type="ChEBI" id="CHEBI:83833"/>
        <dbReference type="ChEBI" id="CHEBI:83834"/>
        <dbReference type="EC" id="5.2.1.8"/>
    </reaction>
</comment>
<comment type="subcellular location">
    <subcellularLocation>
        <location evidence="1">Nucleus</location>
    </subcellularLocation>
</comment>
<comment type="similarity">
    <text evidence="3">Belongs to the cyclophilin-type PPIase family. PPIase H subfamily.</text>
</comment>